<proteinExistence type="inferred from homology"/>
<organism>
    <name type="scientific">Prochlorococcus marinus (strain MIT 9313)</name>
    <dbReference type="NCBI Taxonomy" id="74547"/>
    <lineage>
        <taxon>Bacteria</taxon>
        <taxon>Bacillati</taxon>
        <taxon>Cyanobacteriota</taxon>
        <taxon>Cyanophyceae</taxon>
        <taxon>Synechococcales</taxon>
        <taxon>Prochlorococcaceae</taxon>
        <taxon>Prochlorococcus</taxon>
    </lineage>
</organism>
<accession>Q7V5P2</accession>
<protein>
    <recommendedName>
        <fullName evidence="1">DNA-directed RNA polymerase subunit gamma</fullName>
        <shortName evidence="1">RNAP subunit gamma</shortName>
        <ecNumber evidence="1">2.7.7.6</ecNumber>
    </recommendedName>
    <alternativeName>
        <fullName evidence="1">RNA polymerase subunit gamma</fullName>
    </alternativeName>
    <alternativeName>
        <fullName evidence="1">Transcriptase subunit gamma</fullName>
    </alternativeName>
</protein>
<name>RPOC1_PROMM</name>
<dbReference type="EC" id="2.7.7.6" evidence="1"/>
<dbReference type="EMBL" id="BX548175">
    <property type="protein sequence ID" value="CAE21681.1"/>
    <property type="molecule type" value="Genomic_DNA"/>
</dbReference>
<dbReference type="RefSeq" id="WP_011130874.1">
    <property type="nucleotide sequence ID" value="NC_005071.1"/>
</dbReference>
<dbReference type="SMR" id="Q7V5P2"/>
<dbReference type="KEGG" id="pmt:PMT_1506"/>
<dbReference type="eggNOG" id="COG0086">
    <property type="taxonomic scope" value="Bacteria"/>
</dbReference>
<dbReference type="HOGENOM" id="CLU_030022_2_0_3"/>
<dbReference type="OrthoDB" id="9815296at2"/>
<dbReference type="Proteomes" id="UP000001423">
    <property type="component" value="Chromosome"/>
</dbReference>
<dbReference type="GO" id="GO:0000428">
    <property type="term" value="C:DNA-directed RNA polymerase complex"/>
    <property type="evidence" value="ECO:0007669"/>
    <property type="project" value="UniProtKB-KW"/>
</dbReference>
<dbReference type="GO" id="GO:0003677">
    <property type="term" value="F:DNA binding"/>
    <property type="evidence" value="ECO:0007669"/>
    <property type="project" value="UniProtKB-UniRule"/>
</dbReference>
<dbReference type="GO" id="GO:0003899">
    <property type="term" value="F:DNA-directed RNA polymerase activity"/>
    <property type="evidence" value="ECO:0007669"/>
    <property type="project" value="UniProtKB-UniRule"/>
</dbReference>
<dbReference type="GO" id="GO:0000287">
    <property type="term" value="F:magnesium ion binding"/>
    <property type="evidence" value="ECO:0007669"/>
    <property type="project" value="UniProtKB-UniRule"/>
</dbReference>
<dbReference type="GO" id="GO:0008270">
    <property type="term" value="F:zinc ion binding"/>
    <property type="evidence" value="ECO:0007669"/>
    <property type="project" value="UniProtKB-UniRule"/>
</dbReference>
<dbReference type="GO" id="GO:0006351">
    <property type="term" value="P:DNA-templated transcription"/>
    <property type="evidence" value="ECO:0007669"/>
    <property type="project" value="UniProtKB-UniRule"/>
</dbReference>
<dbReference type="Gene3D" id="1.10.40.90">
    <property type="match status" value="1"/>
</dbReference>
<dbReference type="Gene3D" id="2.40.40.20">
    <property type="match status" value="1"/>
</dbReference>
<dbReference type="Gene3D" id="4.10.860.120">
    <property type="entry name" value="RNA polymerase II, clamp domain"/>
    <property type="match status" value="1"/>
</dbReference>
<dbReference type="Gene3D" id="1.10.274.100">
    <property type="entry name" value="RNA polymerase Rpb1, domain 3"/>
    <property type="match status" value="1"/>
</dbReference>
<dbReference type="HAMAP" id="MF_01323">
    <property type="entry name" value="RNApol_bact_RpoC1"/>
    <property type="match status" value="1"/>
</dbReference>
<dbReference type="InterPro" id="IPR012755">
    <property type="entry name" value="DNA-dir_RpoC1_gamma"/>
</dbReference>
<dbReference type="InterPro" id="IPR045867">
    <property type="entry name" value="DNA-dir_RpoC_beta_prime"/>
</dbReference>
<dbReference type="InterPro" id="IPR000722">
    <property type="entry name" value="RNA_pol_asu"/>
</dbReference>
<dbReference type="InterPro" id="IPR006592">
    <property type="entry name" value="RNA_pol_N"/>
</dbReference>
<dbReference type="InterPro" id="IPR007080">
    <property type="entry name" value="RNA_pol_Rpb1_1"/>
</dbReference>
<dbReference type="InterPro" id="IPR007066">
    <property type="entry name" value="RNA_pol_Rpb1_3"/>
</dbReference>
<dbReference type="InterPro" id="IPR042102">
    <property type="entry name" value="RNA_pol_Rpb1_3_sf"/>
</dbReference>
<dbReference type="InterPro" id="IPR044893">
    <property type="entry name" value="RNA_pol_Rpb1_clamp_domain"/>
</dbReference>
<dbReference type="InterPro" id="IPR034678">
    <property type="entry name" value="RNApol_RpoC1"/>
</dbReference>
<dbReference type="NCBIfam" id="NF002729">
    <property type="entry name" value="PRK02625.1"/>
    <property type="match status" value="1"/>
</dbReference>
<dbReference type="NCBIfam" id="TIGR02387">
    <property type="entry name" value="rpoC1_cyan"/>
    <property type="match status" value="1"/>
</dbReference>
<dbReference type="PANTHER" id="PTHR19376">
    <property type="entry name" value="DNA-DIRECTED RNA POLYMERASE"/>
    <property type="match status" value="1"/>
</dbReference>
<dbReference type="PANTHER" id="PTHR19376:SF54">
    <property type="entry name" value="DNA-DIRECTED RNA POLYMERASE SUBUNIT BETA"/>
    <property type="match status" value="1"/>
</dbReference>
<dbReference type="Pfam" id="PF04997">
    <property type="entry name" value="RNA_pol_Rpb1_1"/>
    <property type="match status" value="1"/>
</dbReference>
<dbReference type="Pfam" id="PF00623">
    <property type="entry name" value="RNA_pol_Rpb1_2"/>
    <property type="match status" value="1"/>
</dbReference>
<dbReference type="Pfam" id="PF04983">
    <property type="entry name" value="RNA_pol_Rpb1_3"/>
    <property type="match status" value="1"/>
</dbReference>
<dbReference type="SMART" id="SM00663">
    <property type="entry name" value="RPOLA_N"/>
    <property type="match status" value="1"/>
</dbReference>
<dbReference type="SUPFAM" id="SSF64484">
    <property type="entry name" value="beta and beta-prime subunits of DNA dependent RNA-polymerase"/>
    <property type="match status" value="1"/>
</dbReference>
<comment type="function">
    <text evidence="1">DNA-dependent RNA polymerase catalyzes the transcription of DNA into RNA using the four ribonucleoside triphosphates as substrates.</text>
</comment>
<comment type="catalytic activity">
    <reaction evidence="1">
        <text>RNA(n) + a ribonucleoside 5'-triphosphate = RNA(n+1) + diphosphate</text>
        <dbReference type="Rhea" id="RHEA:21248"/>
        <dbReference type="Rhea" id="RHEA-COMP:14527"/>
        <dbReference type="Rhea" id="RHEA-COMP:17342"/>
        <dbReference type="ChEBI" id="CHEBI:33019"/>
        <dbReference type="ChEBI" id="CHEBI:61557"/>
        <dbReference type="ChEBI" id="CHEBI:140395"/>
        <dbReference type="EC" id="2.7.7.6"/>
    </reaction>
</comment>
<comment type="cofactor">
    <cofactor evidence="1">
        <name>Mg(2+)</name>
        <dbReference type="ChEBI" id="CHEBI:18420"/>
    </cofactor>
    <text evidence="1">Binds 1 Mg(2+) ion per subunit.</text>
</comment>
<comment type="cofactor">
    <cofactor evidence="1">
        <name>Zn(2+)</name>
        <dbReference type="ChEBI" id="CHEBI:29105"/>
    </cofactor>
    <text evidence="1">Binds 1 Zn(2+) ion per subunit.</text>
</comment>
<comment type="subunit">
    <text evidence="1">In cyanobacteria the RNAP catalytic core is composed of 2 alpha, 1 beta, 1 beta', 1 gamma and 1 omega subunit. When a sigma factor is associated with the core the holoenzyme is formed, which can initiate transcription.</text>
</comment>
<comment type="similarity">
    <text evidence="1">Belongs to the RNA polymerase beta' chain family. RpoC1 subfamily.</text>
</comment>
<keyword id="KW-0240">DNA-directed RNA polymerase</keyword>
<keyword id="KW-0460">Magnesium</keyword>
<keyword id="KW-0479">Metal-binding</keyword>
<keyword id="KW-0548">Nucleotidyltransferase</keyword>
<keyword id="KW-1185">Reference proteome</keyword>
<keyword id="KW-0804">Transcription</keyword>
<keyword id="KW-0808">Transferase</keyword>
<keyword id="KW-0862">Zinc</keyword>
<evidence type="ECO:0000255" key="1">
    <source>
        <dbReference type="HAMAP-Rule" id="MF_01323"/>
    </source>
</evidence>
<reference key="1">
    <citation type="journal article" date="2003" name="Nature">
        <title>Genome divergence in two Prochlorococcus ecotypes reflects oceanic niche differentiation.</title>
        <authorList>
            <person name="Rocap G."/>
            <person name="Larimer F.W."/>
            <person name="Lamerdin J.E."/>
            <person name="Malfatti S."/>
            <person name="Chain P."/>
            <person name="Ahlgren N.A."/>
            <person name="Arellano A."/>
            <person name="Coleman M."/>
            <person name="Hauser L."/>
            <person name="Hess W.R."/>
            <person name="Johnson Z.I."/>
            <person name="Land M.L."/>
            <person name="Lindell D."/>
            <person name="Post A.F."/>
            <person name="Regala W."/>
            <person name="Shah M."/>
            <person name="Shaw S.L."/>
            <person name="Steglich C."/>
            <person name="Sullivan M.B."/>
            <person name="Ting C.S."/>
            <person name="Tolonen A."/>
            <person name="Webb E.A."/>
            <person name="Zinser E.R."/>
            <person name="Chisholm S.W."/>
        </authorList>
    </citation>
    <scope>NUCLEOTIDE SEQUENCE [LARGE SCALE GENOMIC DNA]</scope>
    <source>
        <strain>MIT 9313</strain>
    </source>
</reference>
<gene>
    <name evidence="1" type="primary">rpoC1</name>
    <name type="ordered locus">PMT_1506</name>
</gene>
<sequence length="634" mass="72277">MTNSNLRTENHFDYVKITLASPDRVMEWGQRTLPNGQVVGEVTKPETINYRTLKPEMDGLFCEKIFGPSKDWECHCGKYKRVRHRGIVCERCGVEVTESRVRRHRMGFIKLAAPVSHVWYLKGIPSYVAILLDMPLRDVEQIVYFNCYVVLDPGDHKELKYKQLLTEDEWLEIEDEIYAEDSTIENEPMVGIGAEALKQLLEDLDLPDVAEQLREEISSSKGQKRAKLIKRLRVIDNFIATNARPEWMVLDAIPVIPPDLRPMVQLDGGRFATSDLNDLYRRVINRNNRLARLQEILAPEIIVRNEKRMLQEAVDALIDNGRRGRTVVGANNRPLKSLSDIIEGKQGRFRQNLLGKRVDYSGRSVIVVGPKLKMHQCGLPKEMAIELFQPFVIHRLIRQNIVNNIKAAKKLIQRADDEVMQVLQEVIEGHPILLNRAPTLHRLGIQAFEPKLVDGRAIQLHPLVCPAFNADFDGDQMAVHVPLAIESQTEARMLMLASNNILSPATGDPIITPSQDMVLGSYYLTALKPGASVPEFGDQSRTYSGLEDVIHAFEDKRILLHDWVWVRFNGEVEDEDEIEEPIKAELLSDGTRIEQWTYRRDRFDEDGALISRYILTTVGRVVMNYTIIDAVAVA</sequence>
<feature type="chain" id="PRO_0000067846" description="DNA-directed RNA polymerase subunit gamma">
    <location>
        <begin position="1"/>
        <end position="634"/>
    </location>
</feature>
<feature type="binding site" evidence="1">
    <location>
        <position position="74"/>
    </location>
    <ligand>
        <name>Zn(2+)</name>
        <dbReference type="ChEBI" id="CHEBI:29105"/>
    </ligand>
</feature>
<feature type="binding site" evidence="1">
    <location>
        <position position="76"/>
    </location>
    <ligand>
        <name>Zn(2+)</name>
        <dbReference type="ChEBI" id="CHEBI:29105"/>
    </ligand>
</feature>
<feature type="binding site" evidence="1">
    <location>
        <position position="89"/>
    </location>
    <ligand>
        <name>Zn(2+)</name>
        <dbReference type="ChEBI" id="CHEBI:29105"/>
    </ligand>
</feature>
<feature type="binding site" evidence="1">
    <location>
        <position position="92"/>
    </location>
    <ligand>
        <name>Zn(2+)</name>
        <dbReference type="ChEBI" id="CHEBI:29105"/>
    </ligand>
</feature>
<feature type="binding site" evidence="1">
    <location>
        <position position="471"/>
    </location>
    <ligand>
        <name>Mg(2+)</name>
        <dbReference type="ChEBI" id="CHEBI:18420"/>
    </ligand>
</feature>
<feature type="binding site" evidence="1">
    <location>
        <position position="473"/>
    </location>
    <ligand>
        <name>Mg(2+)</name>
        <dbReference type="ChEBI" id="CHEBI:18420"/>
    </ligand>
</feature>
<feature type="binding site" evidence="1">
    <location>
        <position position="475"/>
    </location>
    <ligand>
        <name>Mg(2+)</name>
        <dbReference type="ChEBI" id="CHEBI:18420"/>
    </ligand>
</feature>